<reference key="1">
    <citation type="journal article" date="2010" name="Nat. Biotechnol.">
        <title>Draft genome sequence of the oilseed species Ricinus communis.</title>
        <authorList>
            <person name="Chan A.P."/>
            <person name="Crabtree J."/>
            <person name="Zhao Q."/>
            <person name="Lorenzi H."/>
            <person name="Orvis J."/>
            <person name="Puiu D."/>
            <person name="Melake-Berhan A."/>
            <person name="Jones K.M."/>
            <person name="Redman J."/>
            <person name="Chen G."/>
            <person name="Cahoon E.B."/>
            <person name="Gedil M."/>
            <person name="Stanke M."/>
            <person name="Haas B.J."/>
            <person name="Wortman J.R."/>
            <person name="Fraser-Liggett C.M."/>
            <person name="Ravel J."/>
            <person name="Rabinowicz P.D."/>
        </authorList>
    </citation>
    <scope>NUCLEOTIDE SEQUENCE [LARGE SCALE GENOMIC DNA]</scope>
    <source>
        <strain>cv. Hale</strain>
    </source>
</reference>
<reference key="2">
    <citation type="journal article" date="2012" name="Phytochemistry">
        <title>Functional characterization of four sesquiterpene synthases from Ricinus communis (castor bean).</title>
        <authorList>
            <person name="Xie X."/>
            <person name="Kirby J."/>
            <person name="Keasling J.D."/>
        </authorList>
    </citation>
    <scope>GENE NAME</scope>
</reference>
<protein>
    <recommendedName>
        <fullName>Probable terpene synthase 3</fullName>
        <shortName>RcSeTPS3</shortName>
        <ecNumber>4.2.3.-</ecNumber>
    </recommendedName>
</protein>
<keyword id="KW-0456">Lyase</keyword>
<keyword id="KW-0460">Magnesium</keyword>
<keyword id="KW-0479">Metal-binding</keyword>
<keyword id="KW-1185">Reference proteome</keyword>
<dbReference type="EC" id="4.2.3.-"/>
<dbReference type="EMBL" id="EQ973917">
    <property type="protein sequence ID" value="EEF38934.1"/>
    <property type="molecule type" value="Genomic_DNA"/>
</dbReference>
<dbReference type="RefSeq" id="XP_002523475.1">
    <property type="nucleotide sequence ID" value="XM_002523429.2"/>
</dbReference>
<dbReference type="SMR" id="B9SBV6"/>
<dbReference type="STRING" id="3988.B9SBV6"/>
<dbReference type="GeneID" id="8282483"/>
<dbReference type="KEGG" id="rcu:8282483"/>
<dbReference type="eggNOG" id="ENOG502QUCN">
    <property type="taxonomic scope" value="Eukaryota"/>
</dbReference>
<dbReference type="InParanoid" id="B9SBV6"/>
<dbReference type="OrthoDB" id="829987at2759"/>
<dbReference type="Proteomes" id="UP000008311">
    <property type="component" value="Unassembled WGS sequence"/>
</dbReference>
<dbReference type="GO" id="GO:0000287">
    <property type="term" value="F:magnesium ion binding"/>
    <property type="evidence" value="ECO:0007669"/>
    <property type="project" value="InterPro"/>
</dbReference>
<dbReference type="GO" id="GO:0010333">
    <property type="term" value="F:terpene synthase activity"/>
    <property type="evidence" value="ECO:0007669"/>
    <property type="project" value="InterPro"/>
</dbReference>
<dbReference type="GO" id="GO:0016102">
    <property type="term" value="P:diterpenoid biosynthetic process"/>
    <property type="evidence" value="ECO:0007669"/>
    <property type="project" value="InterPro"/>
</dbReference>
<dbReference type="GO" id="GO:0120251">
    <property type="term" value="P:hydrocarbon biosynthetic process"/>
    <property type="evidence" value="ECO:0007669"/>
    <property type="project" value="UniProtKB-ARBA"/>
</dbReference>
<dbReference type="CDD" id="cd00684">
    <property type="entry name" value="Terpene_cyclase_plant_C1"/>
    <property type="match status" value="1"/>
</dbReference>
<dbReference type="FunFam" id="1.10.600.10:FF:000007">
    <property type="entry name" value="Isoprene synthase, chloroplastic"/>
    <property type="match status" value="1"/>
</dbReference>
<dbReference type="FunFam" id="1.50.10.130:FF:000001">
    <property type="entry name" value="Isoprene synthase, chloroplastic"/>
    <property type="match status" value="1"/>
</dbReference>
<dbReference type="Gene3D" id="1.10.600.10">
    <property type="entry name" value="Farnesyl Diphosphate Synthase"/>
    <property type="match status" value="1"/>
</dbReference>
<dbReference type="Gene3D" id="1.50.10.130">
    <property type="entry name" value="Terpene synthase, N-terminal domain"/>
    <property type="match status" value="1"/>
</dbReference>
<dbReference type="InterPro" id="IPR008949">
    <property type="entry name" value="Isoprenoid_synthase_dom_sf"/>
</dbReference>
<dbReference type="InterPro" id="IPR034741">
    <property type="entry name" value="Terpene_cyclase-like_1_C"/>
</dbReference>
<dbReference type="InterPro" id="IPR044814">
    <property type="entry name" value="Terpene_cyclase_plant_C1"/>
</dbReference>
<dbReference type="InterPro" id="IPR001906">
    <property type="entry name" value="Terpene_synth_N"/>
</dbReference>
<dbReference type="InterPro" id="IPR036965">
    <property type="entry name" value="Terpene_synth_N_sf"/>
</dbReference>
<dbReference type="InterPro" id="IPR050148">
    <property type="entry name" value="Terpene_synthase-like"/>
</dbReference>
<dbReference type="InterPro" id="IPR005630">
    <property type="entry name" value="Terpene_synthase_metal-bd"/>
</dbReference>
<dbReference type="InterPro" id="IPR008930">
    <property type="entry name" value="Terpenoid_cyclase/PrenylTrfase"/>
</dbReference>
<dbReference type="PANTHER" id="PTHR31225">
    <property type="entry name" value="OS04G0344100 PROTEIN-RELATED"/>
    <property type="match status" value="1"/>
</dbReference>
<dbReference type="PANTHER" id="PTHR31225:SF113">
    <property type="entry name" value="TERPENE SYNTHASE 3-RELATED"/>
    <property type="match status" value="1"/>
</dbReference>
<dbReference type="Pfam" id="PF01397">
    <property type="entry name" value="Terpene_synth"/>
    <property type="match status" value="1"/>
</dbReference>
<dbReference type="Pfam" id="PF03936">
    <property type="entry name" value="Terpene_synth_C"/>
    <property type="match status" value="1"/>
</dbReference>
<dbReference type="SFLD" id="SFLDS00005">
    <property type="entry name" value="Isoprenoid_Synthase_Type_I"/>
    <property type="match status" value="1"/>
</dbReference>
<dbReference type="SFLD" id="SFLDG01019">
    <property type="entry name" value="Terpene_Cyclase_Like_1_C_Termi"/>
    <property type="match status" value="1"/>
</dbReference>
<dbReference type="SUPFAM" id="SSF48239">
    <property type="entry name" value="Terpenoid cyclases/Protein prenyltransferases"/>
    <property type="match status" value="1"/>
</dbReference>
<dbReference type="SUPFAM" id="SSF48576">
    <property type="entry name" value="Terpenoid synthases"/>
    <property type="match status" value="1"/>
</dbReference>
<evidence type="ECO:0000250" key="1"/>
<evidence type="ECO:0000305" key="2"/>
<evidence type="ECO:0000305" key="3">
    <source>
    </source>
</evidence>
<comment type="function">
    <text evidence="1">Probable sesquiterpene synthase.</text>
</comment>
<comment type="cofactor">
    <cofactor evidence="1">
        <name>Mg(2+)</name>
        <dbReference type="ChEBI" id="CHEBI:18420"/>
    </cofactor>
    <text evidence="1">Binds 3 Mg(2+) ions per subunit.</text>
</comment>
<comment type="domain">
    <text evidence="1">The Asp-Asp-Xaa-Xaa-Asp/Glu (DDXXD/E) motif is important for the catalytic activity, presumably through binding to Mg(2+).</text>
</comment>
<comment type="miscellaneous">
    <text evidence="3">Does not produce any detectable product when tested in vitro.</text>
</comment>
<comment type="similarity">
    <text evidence="2">Belongs to the terpene synthase family.</text>
</comment>
<sequence length="547" mass="63693">MALPVQAAPQRAQVRRTAQFHPSVWGDYFIKNAPDNKMVSIWKEQAKVLEEEVRRMIISETQKPSGKLKLIDVIQRLGIAYHFEEEIGEVIEQVYSNYDDDEDLYDIALRFRLLRQQGYNVSSDVFDKFKDCKGDFKKHLVNDVQGLLSLHEASYMSVQGEKILDEALEFTKTHLMATQLSSPLPDQVSHALRWPVRRGLPRKEAWQYFSIYQQDREHIEPLLKLAKLDFNIVQKLHHKDMSIITRWWIDLDFTTKLSFARDRVIECSFWALGVFYEPQFVFARQVLSKAVAILSVMDDIYDVHGTIEELELFTEVVERWDISMKDQLPDYMKWYFEALIDFYAEIEAETTKGGRSFCIHYAKEAVKKQVRAYITEARWFNNDYVPTLEEYISNAVISSTYPILITLSFCGMGKFASKDVFDWLFTEPNKLLYTASGLARLIDDIRSHEFEQERGHVASAVECYMKQHSVSKQEAYNELNSIVVNMWKDLNEELLKETGVLPKPILACILNIVRVMDVVYKDEDSYTNSRNSLKDILATFLVNPVPV</sequence>
<gene>
    <name type="primary">TPS3</name>
    <name type="ORF">RCOM_1045160</name>
</gene>
<proteinExistence type="inferred from homology"/>
<accession>B9SBV6</accession>
<name>TPS3_RICCO</name>
<feature type="chain" id="PRO_0000422201" description="Probable terpene synthase 3">
    <location>
        <begin position="1"/>
        <end position="547"/>
    </location>
</feature>
<feature type="short sequence motif" description="DDXXD motif">
    <location>
        <begin position="298"/>
        <end position="302"/>
    </location>
</feature>
<feature type="binding site" evidence="1">
    <location>
        <position position="298"/>
    </location>
    <ligand>
        <name>Mg(2+)</name>
        <dbReference type="ChEBI" id="CHEBI:18420"/>
        <label>1</label>
    </ligand>
</feature>
<feature type="binding site" evidence="1">
    <location>
        <position position="298"/>
    </location>
    <ligand>
        <name>Mg(2+)</name>
        <dbReference type="ChEBI" id="CHEBI:18420"/>
        <label>2</label>
    </ligand>
</feature>
<feature type="binding site" evidence="1">
    <location>
        <position position="302"/>
    </location>
    <ligand>
        <name>Mg(2+)</name>
        <dbReference type="ChEBI" id="CHEBI:18420"/>
        <label>1</label>
    </ligand>
</feature>
<feature type="binding site" evidence="1">
    <location>
        <position position="302"/>
    </location>
    <ligand>
        <name>Mg(2+)</name>
        <dbReference type="ChEBI" id="CHEBI:18420"/>
        <label>2</label>
    </ligand>
</feature>
<feature type="binding site" evidence="1">
    <location>
        <position position="451"/>
    </location>
    <ligand>
        <name>Mg(2+)</name>
        <dbReference type="ChEBI" id="CHEBI:18420"/>
        <label>3</label>
    </ligand>
</feature>
<organism>
    <name type="scientific">Ricinus communis</name>
    <name type="common">Castor bean</name>
    <dbReference type="NCBI Taxonomy" id="3988"/>
    <lineage>
        <taxon>Eukaryota</taxon>
        <taxon>Viridiplantae</taxon>
        <taxon>Streptophyta</taxon>
        <taxon>Embryophyta</taxon>
        <taxon>Tracheophyta</taxon>
        <taxon>Spermatophyta</taxon>
        <taxon>Magnoliopsida</taxon>
        <taxon>eudicotyledons</taxon>
        <taxon>Gunneridae</taxon>
        <taxon>Pentapetalae</taxon>
        <taxon>rosids</taxon>
        <taxon>fabids</taxon>
        <taxon>Malpighiales</taxon>
        <taxon>Euphorbiaceae</taxon>
        <taxon>Acalyphoideae</taxon>
        <taxon>Acalypheae</taxon>
        <taxon>Ricinus</taxon>
    </lineage>
</organism>